<keyword id="KW-0067">ATP-binding</keyword>
<keyword id="KW-0143">Chaperone</keyword>
<keyword id="KW-0963">Cytoplasm</keyword>
<keyword id="KW-0547">Nucleotide-binding</keyword>
<keyword id="KW-1185">Reference proteome</keyword>
<keyword id="KW-0346">Stress response</keyword>
<accession>Q3JAF6</accession>
<proteinExistence type="inferred from homology"/>
<evidence type="ECO:0000255" key="1">
    <source>
        <dbReference type="HAMAP-Rule" id="MF_00505"/>
    </source>
</evidence>
<feature type="chain" id="PRO_0000224218" description="Chaperone protein HtpG">
    <location>
        <begin position="1"/>
        <end position="634"/>
    </location>
</feature>
<feature type="region of interest" description="A; substrate-binding" evidence="1">
    <location>
        <begin position="1"/>
        <end position="342"/>
    </location>
</feature>
<feature type="region of interest" description="B" evidence="1">
    <location>
        <begin position="343"/>
        <end position="559"/>
    </location>
</feature>
<feature type="region of interest" description="C" evidence="1">
    <location>
        <begin position="560"/>
        <end position="634"/>
    </location>
</feature>
<protein>
    <recommendedName>
        <fullName evidence="1">Chaperone protein HtpG</fullName>
    </recommendedName>
    <alternativeName>
        <fullName evidence="1">Heat shock protein HtpG</fullName>
    </alternativeName>
    <alternativeName>
        <fullName evidence="1">High temperature protein G</fullName>
    </alternativeName>
</protein>
<organism>
    <name type="scientific">Nitrosococcus oceani (strain ATCC 19707 / BCRC 17464 / JCM 30415 / NCIMB 11848 / C-107)</name>
    <dbReference type="NCBI Taxonomy" id="323261"/>
    <lineage>
        <taxon>Bacteria</taxon>
        <taxon>Pseudomonadati</taxon>
        <taxon>Pseudomonadota</taxon>
        <taxon>Gammaproteobacteria</taxon>
        <taxon>Chromatiales</taxon>
        <taxon>Chromatiaceae</taxon>
        <taxon>Nitrosococcus</taxon>
    </lineage>
</organism>
<comment type="function">
    <text evidence="1">Molecular chaperone. Has ATPase activity.</text>
</comment>
<comment type="subunit">
    <text evidence="1">Homodimer.</text>
</comment>
<comment type="subcellular location">
    <subcellularLocation>
        <location evidence="1">Cytoplasm</location>
    </subcellularLocation>
</comment>
<comment type="similarity">
    <text evidence="1">Belongs to the heat shock protein 90 family.</text>
</comment>
<name>HTPG_NITOC</name>
<sequence length="634" mass="72310">MTVASHKETLGFQTEVKQLLNLMIHALYSNKEIFLRELISNGADAADKLRFEALTDDALYEDDSALHIRLSYDKDKRTLTIADNGIGMGRQEVVENIGTIAKSGTRAFLESLSGDQAKDARLIGQFGVGFYSAFIVADKVVLETRRAGFGPEHGVRWESGGAGDYTIETIEKATRGTVVTLHLREGEDEFLDGWRLRHIVTRYSDHIDLPIEIKREIGDEEKSEENGEEWEQINKATALWTLPKNDIKEEEYQAFYKHVAHDFEDPLAWTHNRVEGKLEYTSLLFIPPRAPFDLWERDRTQGIKLYVQRVFIMDDTEQLMPRYLRFVRGVVDSNDLPLNISREILQNNRVIDSIRAGSVKKILGLLEDMAKHEAKKYQSFWKEFGQVMKEGVGEDSGNREQIARLLRFASTHHDTAEQTVSLADYLSRMKEGQDKIYYITADSFPAAKSSPHLEVFRKKGIEVLLLSDRVDEWLVASLPEFEGKSLQSVTKGELDLGHLEDEQEKQQQKEVEEDFQNLVERVKNNLGDKVKEVRVTHRLTDSPVCLVVEQHDMSGYLERLLKEAGQQAPHIQPILELNPAHPIIARLKGEESEENFGDWAHLLFEQALLAEGGRLEEPALFVKRLNSLLLAMAD</sequence>
<gene>
    <name evidence="1" type="primary">htpG</name>
    <name type="ordered locus">Noc_1718</name>
</gene>
<reference key="1">
    <citation type="journal article" date="2006" name="Appl. Environ. Microbiol.">
        <title>Complete genome sequence of the marine, chemolithoautotrophic, ammonia-oxidizing bacterium Nitrosococcus oceani ATCC 19707.</title>
        <authorList>
            <person name="Klotz M.G."/>
            <person name="Arp D.J."/>
            <person name="Chain P.S.G."/>
            <person name="El-Sheikh A.F."/>
            <person name="Hauser L.J."/>
            <person name="Hommes N.G."/>
            <person name="Larimer F.W."/>
            <person name="Malfatti S.A."/>
            <person name="Norton J.M."/>
            <person name="Poret-Peterson A.T."/>
            <person name="Vergez L.M."/>
            <person name="Ward B.B."/>
        </authorList>
    </citation>
    <scope>NUCLEOTIDE SEQUENCE [LARGE SCALE GENOMIC DNA]</scope>
    <source>
        <strain>ATCC 19707 / BCRC 17464 / JCM 30415 / NCIMB 11848 / C-107</strain>
    </source>
</reference>
<dbReference type="EMBL" id="CP000127">
    <property type="protein sequence ID" value="ABA58190.1"/>
    <property type="molecule type" value="Genomic_DNA"/>
</dbReference>
<dbReference type="RefSeq" id="WP_002810621.1">
    <property type="nucleotide sequence ID" value="NC_007484.1"/>
</dbReference>
<dbReference type="SMR" id="Q3JAF6"/>
<dbReference type="FunCoup" id="Q3JAF6">
    <property type="interactions" value="448"/>
</dbReference>
<dbReference type="STRING" id="323261.Noc_1718"/>
<dbReference type="KEGG" id="noc:Noc_1718"/>
<dbReference type="eggNOG" id="COG0326">
    <property type="taxonomic scope" value="Bacteria"/>
</dbReference>
<dbReference type="HOGENOM" id="CLU_006684_3_0_6"/>
<dbReference type="InParanoid" id="Q3JAF6"/>
<dbReference type="Proteomes" id="UP000006838">
    <property type="component" value="Chromosome"/>
</dbReference>
<dbReference type="GO" id="GO:0005737">
    <property type="term" value="C:cytoplasm"/>
    <property type="evidence" value="ECO:0007669"/>
    <property type="project" value="UniProtKB-SubCell"/>
</dbReference>
<dbReference type="GO" id="GO:0005524">
    <property type="term" value="F:ATP binding"/>
    <property type="evidence" value="ECO:0007669"/>
    <property type="project" value="UniProtKB-UniRule"/>
</dbReference>
<dbReference type="GO" id="GO:0016887">
    <property type="term" value="F:ATP hydrolysis activity"/>
    <property type="evidence" value="ECO:0007669"/>
    <property type="project" value="InterPro"/>
</dbReference>
<dbReference type="GO" id="GO:0140662">
    <property type="term" value="F:ATP-dependent protein folding chaperone"/>
    <property type="evidence" value="ECO:0007669"/>
    <property type="project" value="InterPro"/>
</dbReference>
<dbReference type="GO" id="GO:0051082">
    <property type="term" value="F:unfolded protein binding"/>
    <property type="evidence" value="ECO:0007669"/>
    <property type="project" value="UniProtKB-UniRule"/>
</dbReference>
<dbReference type="CDD" id="cd16927">
    <property type="entry name" value="HATPase_Hsp90-like"/>
    <property type="match status" value="1"/>
</dbReference>
<dbReference type="FunFam" id="3.30.230.80:FF:000002">
    <property type="entry name" value="Molecular chaperone HtpG"/>
    <property type="match status" value="1"/>
</dbReference>
<dbReference type="FunFam" id="3.30.565.10:FF:000009">
    <property type="entry name" value="Molecular chaperone HtpG"/>
    <property type="match status" value="1"/>
</dbReference>
<dbReference type="Gene3D" id="3.30.230.80">
    <property type="match status" value="1"/>
</dbReference>
<dbReference type="Gene3D" id="3.40.50.11260">
    <property type="match status" value="1"/>
</dbReference>
<dbReference type="Gene3D" id="1.20.120.790">
    <property type="entry name" value="Heat shock protein 90, C-terminal domain"/>
    <property type="match status" value="1"/>
</dbReference>
<dbReference type="Gene3D" id="3.30.565.10">
    <property type="entry name" value="Histidine kinase-like ATPase, C-terminal domain"/>
    <property type="match status" value="1"/>
</dbReference>
<dbReference type="HAMAP" id="MF_00505">
    <property type="entry name" value="HSP90"/>
    <property type="match status" value="1"/>
</dbReference>
<dbReference type="InterPro" id="IPR036890">
    <property type="entry name" value="HATPase_C_sf"/>
</dbReference>
<dbReference type="InterPro" id="IPR019805">
    <property type="entry name" value="Heat_shock_protein_90_CS"/>
</dbReference>
<dbReference type="InterPro" id="IPR037196">
    <property type="entry name" value="HSP90_C"/>
</dbReference>
<dbReference type="InterPro" id="IPR001404">
    <property type="entry name" value="Hsp90_fam"/>
</dbReference>
<dbReference type="InterPro" id="IPR020575">
    <property type="entry name" value="Hsp90_N"/>
</dbReference>
<dbReference type="InterPro" id="IPR020568">
    <property type="entry name" value="Ribosomal_Su5_D2-typ_SF"/>
</dbReference>
<dbReference type="NCBIfam" id="NF003555">
    <property type="entry name" value="PRK05218.1"/>
    <property type="match status" value="1"/>
</dbReference>
<dbReference type="PANTHER" id="PTHR11528">
    <property type="entry name" value="HEAT SHOCK PROTEIN 90 FAMILY MEMBER"/>
    <property type="match status" value="1"/>
</dbReference>
<dbReference type="Pfam" id="PF13589">
    <property type="entry name" value="HATPase_c_3"/>
    <property type="match status" value="1"/>
</dbReference>
<dbReference type="Pfam" id="PF00183">
    <property type="entry name" value="HSP90"/>
    <property type="match status" value="1"/>
</dbReference>
<dbReference type="PIRSF" id="PIRSF002583">
    <property type="entry name" value="Hsp90"/>
    <property type="match status" value="1"/>
</dbReference>
<dbReference type="PRINTS" id="PR00775">
    <property type="entry name" value="HEATSHOCK90"/>
</dbReference>
<dbReference type="SMART" id="SM00387">
    <property type="entry name" value="HATPase_c"/>
    <property type="match status" value="1"/>
</dbReference>
<dbReference type="SUPFAM" id="SSF55874">
    <property type="entry name" value="ATPase domain of HSP90 chaperone/DNA topoisomerase II/histidine kinase"/>
    <property type="match status" value="1"/>
</dbReference>
<dbReference type="SUPFAM" id="SSF110942">
    <property type="entry name" value="HSP90 C-terminal domain"/>
    <property type="match status" value="1"/>
</dbReference>
<dbReference type="SUPFAM" id="SSF54211">
    <property type="entry name" value="Ribosomal protein S5 domain 2-like"/>
    <property type="match status" value="1"/>
</dbReference>
<dbReference type="PROSITE" id="PS00298">
    <property type="entry name" value="HSP90"/>
    <property type="match status" value="1"/>
</dbReference>